<organism>
    <name type="scientific">Phytophthora infestans (strain T30-4)</name>
    <name type="common">Potato late blight agent</name>
    <dbReference type="NCBI Taxonomy" id="403677"/>
    <lineage>
        <taxon>Eukaryota</taxon>
        <taxon>Sar</taxon>
        <taxon>Stramenopiles</taxon>
        <taxon>Oomycota</taxon>
        <taxon>Peronosporales</taxon>
        <taxon>Peronosporaceae</taxon>
        <taxon>Phytophthora</taxon>
    </lineage>
</organism>
<comment type="function">
    <text evidence="1">Plays an important role in the de novo pathway and in the salvage pathway of purine nucleotide biosynthesis. Catalyzes the first committed step in the biosynthesis of AMP from IMP (By similarity).</text>
</comment>
<comment type="catalytic activity">
    <reaction evidence="2">
        <text>IMP + L-aspartate + GTP = N(6)-(1,2-dicarboxyethyl)-AMP + GDP + phosphate + 2 H(+)</text>
        <dbReference type="Rhea" id="RHEA:15753"/>
        <dbReference type="ChEBI" id="CHEBI:15378"/>
        <dbReference type="ChEBI" id="CHEBI:29991"/>
        <dbReference type="ChEBI" id="CHEBI:37565"/>
        <dbReference type="ChEBI" id="CHEBI:43474"/>
        <dbReference type="ChEBI" id="CHEBI:57567"/>
        <dbReference type="ChEBI" id="CHEBI:58053"/>
        <dbReference type="ChEBI" id="CHEBI:58189"/>
        <dbReference type="EC" id="6.3.4.4"/>
    </reaction>
</comment>
<comment type="cofactor">
    <cofactor evidence="2">
        <name>Mg(2+)</name>
        <dbReference type="ChEBI" id="CHEBI:18420"/>
    </cofactor>
    <text evidence="2">Binds 1 Mg(2+) ion per subunit.</text>
</comment>
<comment type="pathway">
    <text evidence="2">Purine metabolism; AMP biosynthesis via de novo pathway; AMP from IMP: step 1/2.</text>
</comment>
<comment type="subunit">
    <text evidence="2">Homodimer.</text>
</comment>
<comment type="subcellular location">
    <subcellularLocation>
        <location evidence="2">Cytoplasm</location>
    </subcellularLocation>
</comment>
<comment type="similarity">
    <text evidence="2">Belongs to the adenylosuccinate synthetase family.</text>
</comment>
<proteinExistence type="inferred from homology"/>
<feature type="chain" id="PRO_0000399310" description="Adenylosuccinate synthetase">
    <location>
        <begin position="1"/>
        <end position="551"/>
    </location>
</feature>
<feature type="active site" description="Proton acceptor" evidence="2">
    <location>
        <position position="132"/>
    </location>
</feature>
<feature type="active site" description="Proton donor" evidence="2">
    <location>
        <position position="160"/>
    </location>
</feature>
<feature type="binding site" evidence="2">
    <location>
        <begin position="131"/>
        <end position="137"/>
    </location>
    <ligand>
        <name>GTP</name>
        <dbReference type="ChEBI" id="CHEBI:37565"/>
    </ligand>
</feature>
<feature type="binding site" description="in other chain" evidence="2">
    <location>
        <begin position="132"/>
        <end position="135"/>
    </location>
    <ligand>
        <name>IMP</name>
        <dbReference type="ChEBI" id="CHEBI:58053"/>
        <note>ligand shared between dimeric partners</note>
    </ligand>
</feature>
<feature type="binding site" evidence="2">
    <location>
        <position position="132"/>
    </location>
    <ligand>
        <name>Mg(2+)</name>
        <dbReference type="ChEBI" id="CHEBI:18420"/>
    </ligand>
</feature>
<feature type="binding site" description="in other chain" evidence="2">
    <location>
        <begin position="157"/>
        <end position="160"/>
    </location>
    <ligand>
        <name>IMP</name>
        <dbReference type="ChEBI" id="CHEBI:58053"/>
        <note>ligand shared between dimeric partners</note>
    </ligand>
</feature>
<feature type="binding site" evidence="2">
    <location>
        <begin position="159"/>
        <end position="161"/>
    </location>
    <ligand>
        <name>GTP</name>
        <dbReference type="ChEBI" id="CHEBI:37565"/>
    </ligand>
</feature>
<feature type="binding site" evidence="2">
    <location>
        <position position="159"/>
    </location>
    <ligand>
        <name>Mg(2+)</name>
        <dbReference type="ChEBI" id="CHEBI:18420"/>
    </ligand>
</feature>
<feature type="binding site" description="in other chain" evidence="2">
    <location>
        <position position="248"/>
    </location>
    <ligand>
        <name>IMP</name>
        <dbReference type="ChEBI" id="CHEBI:58053"/>
        <note>ligand shared between dimeric partners</note>
    </ligand>
</feature>
<feature type="binding site" evidence="2">
    <location>
        <position position="262"/>
    </location>
    <ligand>
        <name>IMP</name>
        <dbReference type="ChEBI" id="CHEBI:58053"/>
        <note>ligand shared between dimeric partners</note>
    </ligand>
</feature>
<feature type="binding site" description="in other chain" evidence="2">
    <location>
        <position position="339"/>
    </location>
    <ligand>
        <name>IMP</name>
        <dbReference type="ChEBI" id="CHEBI:58053"/>
        <note>ligand shared between dimeric partners</note>
    </ligand>
</feature>
<feature type="binding site" description="in other chain" evidence="2">
    <location>
        <position position="354"/>
    </location>
    <ligand>
        <name>IMP</name>
        <dbReference type="ChEBI" id="CHEBI:58053"/>
        <note>ligand shared between dimeric partners</note>
    </ligand>
</feature>
<feature type="binding site" evidence="2">
    <location>
        <begin position="414"/>
        <end position="420"/>
    </location>
    <ligand>
        <name>substrate</name>
    </ligand>
</feature>
<feature type="binding site" description="in other chain" evidence="2">
    <location>
        <position position="418"/>
    </location>
    <ligand>
        <name>IMP</name>
        <dbReference type="ChEBI" id="CHEBI:58053"/>
        <note>ligand shared between dimeric partners</note>
    </ligand>
</feature>
<feature type="binding site" evidence="2">
    <location>
        <position position="420"/>
    </location>
    <ligand>
        <name>GTP</name>
        <dbReference type="ChEBI" id="CHEBI:37565"/>
    </ligand>
</feature>
<feature type="binding site" evidence="2">
    <location>
        <begin position="446"/>
        <end position="448"/>
    </location>
    <ligand>
        <name>GTP</name>
        <dbReference type="ChEBI" id="CHEBI:37565"/>
    </ligand>
</feature>
<feature type="binding site" evidence="2">
    <location>
        <begin position="528"/>
        <end position="530"/>
    </location>
    <ligand>
        <name>GTP</name>
        <dbReference type="ChEBI" id="CHEBI:37565"/>
    </ligand>
</feature>
<accession>D0NVH9</accession>
<dbReference type="EC" id="6.3.4.4" evidence="2"/>
<dbReference type="EMBL" id="DS028168">
    <property type="protein sequence ID" value="EEY66656.1"/>
    <property type="molecule type" value="Genomic_DNA"/>
</dbReference>
<dbReference type="RefSeq" id="XP_002896957.1">
    <property type="nucleotide sequence ID" value="XM_002896911.1"/>
</dbReference>
<dbReference type="SMR" id="D0NVH9"/>
<dbReference type="FunCoup" id="D0NVH9">
    <property type="interactions" value="314"/>
</dbReference>
<dbReference type="STRING" id="403677.D0NVH9"/>
<dbReference type="EnsemblProtists" id="PITG_16736T0">
    <property type="protein sequence ID" value="PITG_16736T0"/>
    <property type="gene ID" value="PITG_16736"/>
</dbReference>
<dbReference type="GeneID" id="9465521"/>
<dbReference type="KEGG" id="pif:PITG_16736"/>
<dbReference type="VEuPathDB" id="FungiDB:PITG_16736"/>
<dbReference type="eggNOG" id="KOG1355">
    <property type="taxonomic scope" value="Eukaryota"/>
</dbReference>
<dbReference type="HOGENOM" id="CLU_029848_3_1_1"/>
<dbReference type="InParanoid" id="D0NVH9"/>
<dbReference type="OMA" id="FHHAKPI"/>
<dbReference type="OrthoDB" id="10265645at2759"/>
<dbReference type="UniPathway" id="UPA00075">
    <property type="reaction ID" value="UER00335"/>
</dbReference>
<dbReference type="Proteomes" id="UP000006643">
    <property type="component" value="Partially assembled WGS sequence"/>
</dbReference>
<dbReference type="GO" id="GO:0005737">
    <property type="term" value="C:cytoplasm"/>
    <property type="evidence" value="ECO:0007669"/>
    <property type="project" value="UniProtKB-SubCell"/>
</dbReference>
<dbReference type="GO" id="GO:0004019">
    <property type="term" value="F:adenylosuccinate synthase activity"/>
    <property type="evidence" value="ECO:0007669"/>
    <property type="project" value="UniProtKB-UniRule"/>
</dbReference>
<dbReference type="GO" id="GO:0005525">
    <property type="term" value="F:GTP binding"/>
    <property type="evidence" value="ECO:0007669"/>
    <property type="project" value="UniProtKB-UniRule"/>
</dbReference>
<dbReference type="GO" id="GO:0000287">
    <property type="term" value="F:magnesium ion binding"/>
    <property type="evidence" value="ECO:0007669"/>
    <property type="project" value="UniProtKB-UniRule"/>
</dbReference>
<dbReference type="GO" id="GO:0044208">
    <property type="term" value="P:'de novo' AMP biosynthetic process"/>
    <property type="evidence" value="ECO:0007669"/>
    <property type="project" value="UniProtKB-UniRule"/>
</dbReference>
<dbReference type="GO" id="GO:0046040">
    <property type="term" value="P:IMP metabolic process"/>
    <property type="evidence" value="ECO:0007669"/>
    <property type="project" value="TreeGrafter"/>
</dbReference>
<dbReference type="CDD" id="cd03108">
    <property type="entry name" value="AdSS"/>
    <property type="match status" value="1"/>
</dbReference>
<dbReference type="FunFam" id="3.90.170.10:FF:000001">
    <property type="entry name" value="Adenylosuccinate synthetase"/>
    <property type="match status" value="1"/>
</dbReference>
<dbReference type="FunFam" id="1.10.300.10:FF:000002">
    <property type="entry name" value="Adenylosuccinate synthetase, chloroplastic"/>
    <property type="match status" value="1"/>
</dbReference>
<dbReference type="Gene3D" id="3.40.440.10">
    <property type="entry name" value="Adenylosuccinate Synthetase, subunit A, domain 1"/>
    <property type="match status" value="1"/>
</dbReference>
<dbReference type="Gene3D" id="1.10.300.10">
    <property type="entry name" value="Adenylosuccinate Synthetase, subunit A, domain 2"/>
    <property type="match status" value="1"/>
</dbReference>
<dbReference type="Gene3D" id="3.90.170.10">
    <property type="entry name" value="Adenylosuccinate Synthetase, subunit A, domain 3"/>
    <property type="match status" value="1"/>
</dbReference>
<dbReference type="HAMAP" id="MF_00011">
    <property type="entry name" value="Adenylosucc_synth"/>
    <property type="match status" value="1"/>
</dbReference>
<dbReference type="InterPro" id="IPR018220">
    <property type="entry name" value="Adenylosuccin_syn_GTP-bd"/>
</dbReference>
<dbReference type="InterPro" id="IPR033128">
    <property type="entry name" value="Adenylosuccin_syn_Lys_AS"/>
</dbReference>
<dbReference type="InterPro" id="IPR042109">
    <property type="entry name" value="Adenylosuccinate_synth_dom1"/>
</dbReference>
<dbReference type="InterPro" id="IPR042110">
    <property type="entry name" value="Adenylosuccinate_synth_dom2"/>
</dbReference>
<dbReference type="InterPro" id="IPR042111">
    <property type="entry name" value="Adenylosuccinate_synth_dom3"/>
</dbReference>
<dbReference type="InterPro" id="IPR001114">
    <property type="entry name" value="Adenylosuccinate_synthetase"/>
</dbReference>
<dbReference type="InterPro" id="IPR027417">
    <property type="entry name" value="P-loop_NTPase"/>
</dbReference>
<dbReference type="NCBIfam" id="NF002223">
    <property type="entry name" value="PRK01117.1"/>
    <property type="match status" value="1"/>
</dbReference>
<dbReference type="NCBIfam" id="TIGR00184">
    <property type="entry name" value="purA"/>
    <property type="match status" value="1"/>
</dbReference>
<dbReference type="PANTHER" id="PTHR11846">
    <property type="entry name" value="ADENYLOSUCCINATE SYNTHETASE"/>
    <property type="match status" value="1"/>
</dbReference>
<dbReference type="PANTHER" id="PTHR11846:SF0">
    <property type="entry name" value="ADENYLOSUCCINATE SYNTHETASE"/>
    <property type="match status" value="1"/>
</dbReference>
<dbReference type="Pfam" id="PF00709">
    <property type="entry name" value="Adenylsucc_synt"/>
    <property type="match status" value="1"/>
</dbReference>
<dbReference type="SMART" id="SM00788">
    <property type="entry name" value="Adenylsucc_synt"/>
    <property type="match status" value="1"/>
</dbReference>
<dbReference type="SUPFAM" id="SSF52540">
    <property type="entry name" value="P-loop containing nucleoside triphosphate hydrolases"/>
    <property type="match status" value="1"/>
</dbReference>
<dbReference type="PROSITE" id="PS01266">
    <property type="entry name" value="ADENYLOSUCCIN_SYN_1"/>
    <property type="match status" value="1"/>
</dbReference>
<dbReference type="PROSITE" id="PS00513">
    <property type="entry name" value="ADENYLOSUCCIN_SYN_2"/>
    <property type="match status" value="1"/>
</dbReference>
<protein>
    <recommendedName>
        <fullName evidence="2">Adenylosuccinate synthetase</fullName>
        <shortName evidence="2">AMPSase</shortName>
        <shortName evidence="2">AdSS</shortName>
        <ecNumber evidence="2">6.3.4.4</ecNumber>
    </recommendedName>
    <alternativeName>
        <fullName evidence="2">IMP--aspartate ligase</fullName>
    </alternativeName>
</protein>
<reference key="1">
    <citation type="journal article" date="2009" name="Nature">
        <title>Genome sequence and analysis of the Irish potato famine pathogen Phytophthora infestans.</title>
        <authorList>
            <consortium name="The Broad Institute Genome Sequencing Platform"/>
            <person name="Haas B.J."/>
            <person name="Kamoun S."/>
            <person name="Zody M.C."/>
            <person name="Jiang R.H."/>
            <person name="Handsaker R.E."/>
            <person name="Cano L.M."/>
            <person name="Grabherr M."/>
            <person name="Kodira C.D."/>
            <person name="Raffaele S."/>
            <person name="Torto-Alalibo T."/>
            <person name="Bozkurt T.O."/>
            <person name="Ah-Fong A.M."/>
            <person name="Alvarado L."/>
            <person name="Anderson V.L."/>
            <person name="Armstrong M.R."/>
            <person name="Avrova A."/>
            <person name="Baxter L."/>
            <person name="Beynon J."/>
            <person name="Boevink P.C."/>
            <person name="Bollmann S.R."/>
            <person name="Bos J.I."/>
            <person name="Bulone V."/>
            <person name="Cai G."/>
            <person name="Cakir C."/>
            <person name="Carrington J.C."/>
            <person name="Chawner M."/>
            <person name="Conti L."/>
            <person name="Costanzo S."/>
            <person name="Ewan R."/>
            <person name="Fahlgren N."/>
            <person name="Fischbach M.A."/>
            <person name="Fugelstad J."/>
            <person name="Gilroy E.M."/>
            <person name="Gnerre S."/>
            <person name="Green P.J."/>
            <person name="Grenville-Briggs L.J."/>
            <person name="Griffith J."/>
            <person name="Grunwald N.J."/>
            <person name="Horn K."/>
            <person name="Horner N.R."/>
            <person name="Hu C.H."/>
            <person name="Huitema E."/>
            <person name="Jeong D.H."/>
            <person name="Jones A.M."/>
            <person name="Jones J.D."/>
            <person name="Jones R.W."/>
            <person name="Karlsson E.K."/>
            <person name="Kunjeti S.G."/>
            <person name="Lamour K."/>
            <person name="Liu Z."/>
            <person name="Ma L."/>
            <person name="Maclean D."/>
            <person name="Chibucos M.C."/>
            <person name="McDonald H."/>
            <person name="McWalters J."/>
            <person name="Meijer H.J."/>
            <person name="Morgan W."/>
            <person name="Morris P.F."/>
            <person name="Munro C.A."/>
            <person name="O'Neill K."/>
            <person name="Ospina-Giraldo M."/>
            <person name="Pinzon A."/>
            <person name="Pritchard L."/>
            <person name="Ramsahoye B."/>
            <person name="Ren Q."/>
            <person name="Restrepo S."/>
            <person name="Roy S."/>
            <person name="Sadanandom A."/>
            <person name="Savidor A."/>
            <person name="Schornack S."/>
            <person name="Schwartz D.C."/>
            <person name="Schumann U.D."/>
            <person name="Schwessinger B."/>
            <person name="Seyer L."/>
            <person name="Sharpe T."/>
            <person name="Silvar C."/>
            <person name="Song J."/>
            <person name="Studholme D.J."/>
            <person name="Sykes S."/>
            <person name="Thines M."/>
            <person name="van de Vondervoort P.J."/>
            <person name="Phuntumart V."/>
            <person name="Wawra S."/>
            <person name="Weide R."/>
            <person name="Win J."/>
            <person name="Young C."/>
            <person name="Zhou S."/>
            <person name="Fry W."/>
            <person name="Meyers B.C."/>
            <person name="van West P."/>
            <person name="Ristaino J."/>
            <person name="Govers F."/>
            <person name="Birch P.R."/>
            <person name="Whisson S.C."/>
            <person name="Judelson H.S."/>
            <person name="Nusbaum C."/>
        </authorList>
    </citation>
    <scope>NUCLEOTIDE SEQUENCE [LARGE SCALE GENOMIC DNA]</scope>
    <source>
        <strain>T30-4</strain>
    </source>
</reference>
<gene>
    <name type="ORF">PITG_16736</name>
</gene>
<evidence type="ECO:0000250" key="1"/>
<evidence type="ECO:0000255" key="2">
    <source>
        <dbReference type="HAMAP-Rule" id="MF_03125"/>
    </source>
</evidence>
<sequence length="551" mass="60044">MRLDVVSKAARAAQRFSAQCHGQKFRTAHASATLRAALAVEASEANQKGRSAGLLAAMALMGVAGVASMDDNAAAKCEGAAKPVSREAVTQAMLKEVVTKLNRIESAVANPHRHTDGLNVGVDVVLGAQWGDEGKGKLVDSLSQSYDVIVRVAGGSNAGHTIVHEGKKYKFHLVPSGILNPNAICIIGNGVVVHLPSFLEELEELKRMGVDYEGRILISDRAHMVLDLHQEVDGINELRRGRNKIGTTKKGIGPAYSSKMLRNGVRVGDLRYFDDFTEKMVDLVKFYKDNYPELEADAEAEIKVYSDMKDKILDMTVDTVSYLNNAYVAGKKILVEGANATMLDIDFGTYPYVTSSNPSIGSVCTGGGISPNRLNGIIGIVKAYCTRVGEGPFPTELHDDVGEHLGTVGAEFGTTTGRARRCGWLDIPQMRYSNMVNGFTELNLTKLDVLTGLKKVKIGVAYWHEGKKLDGMPSNLQLLQDSVVEYEEMEGWSEDISKCKTFEELPVAAQKYVLRVEELLGTHIKWIGVGPDRFDVITRTHPLEKAYISGN</sequence>
<name>PURA_PHYIT</name>
<keyword id="KW-0963">Cytoplasm</keyword>
<keyword id="KW-0342">GTP-binding</keyword>
<keyword id="KW-0436">Ligase</keyword>
<keyword id="KW-0460">Magnesium</keyword>
<keyword id="KW-0479">Metal-binding</keyword>
<keyword id="KW-0547">Nucleotide-binding</keyword>
<keyword id="KW-0658">Purine biosynthesis</keyword>
<keyword id="KW-1185">Reference proteome</keyword>